<gene>
    <name evidence="7" type="primary">sqr</name>
    <name evidence="7" type="ordered locus">aq_2186</name>
</gene>
<protein>
    <recommendedName>
        <fullName>Sulfide-quinone reductase</fullName>
        <shortName>SQR</shortName>
        <ecNumber evidence="4 5">1.8.5.4</ecNumber>
    </recommendedName>
    <alternativeName>
        <fullName evidence="4 5">Sulfide:quinone oxidoreductase</fullName>
    </alternativeName>
</protein>
<comment type="function">
    <text evidence="4 5">Catalyzes the oxidation of hydrogen sulfide, with the help of a quinone. Consecutive reaction cycles lead to the accumulation of a polysulfide product on the active site Cys residues; these products are released when they exceed a critical length, typically as cyclooctasulfur.</text>
</comment>
<comment type="catalytic activity">
    <reaction evidence="4 5">
        <text>n a quinone + n hydrogen sulfide + n H(+) = polysulfur(n-2) + n a quinol</text>
        <dbReference type="Rhea" id="RHEA:30239"/>
        <dbReference type="Rhea" id="RHEA-COMP:19475"/>
        <dbReference type="ChEBI" id="CHEBI:15378"/>
        <dbReference type="ChEBI" id="CHEBI:17909"/>
        <dbReference type="ChEBI" id="CHEBI:24646"/>
        <dbReference type="ChEBI" id="CHEBI:29919"/>
        <dbReference type="ChEBI" id="CHEBI:132124"/>
        <dbReference type="EC" id="1.8.5.4"/>
    </reaction>
</comment>
<comment type="cofactor">
    <cofactor evidence="3">
        <name>FAD</name>
        <dbReference type="ChEBI" id="CHEBI:57692"/>
    </cofactor>
    <text evidence="3">Binds 1 FAD per subunit.</text>
</comment>
<comment type="subunit">
    <text evidence="3">Homotrimer.</text>
</comment>
<comment type="interaction">
    <interactant intactId="EBI-15785206">
        <id>O67931</id>
    </interactant>
    <interactant intactId="EBI-15785206">
        <id>O67931</id>
        <label>sqr</label>
    </interactant>
    <organismsDiffer>false</organismsDiffer>
    <experiments>2</experiments>
</comment>
<comment type="subcellular location">
    <subcellularLocation>
        <location evidence="2 3">Membrane</location>
        <topology evidence="2 3">Peripheral membrane protein</topology>
    </subcellularLocation>
</comment>
<comment type="similarity">
    <text evidence="6">Belongs to the SQRD family.</text>
</comment>
<evidence type="ECO:0000250" key="1">
    <source>
        <dbReference type="UniProtKB" id="Q7ZAG8"/>
    </source>
</evidence>
<evidence type="ECO:0000269" key="2">
    <source>
    </source>
</evidence>
<evidence type="ECO:0000269" key="3">
    <source>
    </source>
</evidence>
<evidence type="ECO:0000303" key="4">
    <source>
    </source>
</evidence>
<evidence type="ECO:0000303" key="5">
    <source>
    </source>
</evidence>
<evidence type="ECO:0000305" key="6"/>
<evidence type="ECO:0000312" key="7">
    <source>
        <dbReference type="EMBL" id="AAC07903.1"/>
    </source>
</evidence>
<evidence type="ECO:0007829" key="8">
    <source>
        <dbReference type="PDB" id="3HYW"/>
    </source>
</evidence>
<organism>
    <name type="scientific">Aquifex aeolicus (strain VF5)</name>
    <dbReference type="NCBI Taxonomy" id="224324"/>
    <lineage>
        <taxon>Bacteria</taxon>
        <taxon>Pseudomonadati</taxon>
        <taxon>Aquificota</taxon>
        <taxon>Aquificia</taxon>
        <taxon>Aquificales</taxon>
        <taxon>Aquificaceae</taxon>
        <taxon>Aquifex</taxon>
    </lineage>
</organism>
<name>SQRD_AQUAE</name>
<reference key="1">
    <citation type="journal article" date="1998" name="Nature">
        <title>The complete genome of the hyperthermophilic bacterium Aquifex aeolicus.</title>
        <authorList>
            <person name="Deckert G."/>
            <person name="Warren P.V."/>
            <person name="Gaasterland T."/>
            <person name="Young W.G."/>
            <person name="Lenox A.L."/>
            <person name="Graham D.E."/>
            <person name="Overbeek R."/>
            <person name="Snead M.A."/>
            <person name="Keller M."/>
            <person name="Aujay M."/>
            <person name="Huber R."/>
            <person name="Feldman R.A."/>
            <person name="Short J.M."/>
            <person name="Olsen G.J."/>
            <person name="Swanson R.V."/>
        </authorList>
    </citation>
    <scope>NUCLEOTIDE SEQUENCE [LARGE SCALE GENOMIC DNA]</scope>
    <source>
        <strain>VF5</strain>
    </source>
</reference>
<reference key="2">
    <citation type="journal article" date="2000" name="Arch. Microbiol.">
        <title>Sulfide:quinone oxidoreductase in membranes of the hyperthermophilic bacterium Aquifex aeolicus (VF5).</title>
        <authorList>
            <person name="Nuebel T."/>
            <person name="Klughammer C."/>
            <person name="Huber R."/>
            <person name="Hauska G."/>
            <person name="Schuetz M."/>
        </authorList>
    </citation>
    <scope>SUBCELLULAR LOCATION</scope>
    <scope>IDENTIFICATION</scope>
    <scope>FUNCTION</scope>
    <scope>CATALYTIC ACTIVITY</scope>
</reference>
<reference key="3">
    <citation type="journal article" date="2009" name="Proc. Natl. Acad. Sci. U.S.A.">
        <title>The structure of Aquifex aeolicus sulfide:quinone oxidoreductase, a basis to understand sulfide detoxification and respiration.</title>
        <authorList>
            <person name="Marcia M."/>
            <person name="Ermler U."/>
            <person name="Peng G."/>
            <person name="Michel H."/>
        </authorList>
    </citation>
    <scope>X-RAY CRYSTALLOGRAPHY (2.00 ANGSTROMS) IN COMPLEX WITH FAD AND UBIQUINONE ANALOG</scope>
    <scope>FUNCTION</scope>
    <scope>CATALYTIC ACTIVITY</scope>
    <scope>ACTIVE SITE</scope>
    <scope>COFACTOR</scope>
    <scope>SUBUNIT</scope>
    <scope>SUBCELLULAR LOCATION</scope>
    <scope>DISULFIDE BOND</scope>
</reference>
<keyword id="KW-0002">3D-structure</keyword>
<keyword id="KW-1015">Disulfide bond</keyword>
<keyword id="KW-0274">FAD</keyword>
<keyword id="KW-0285">Flavoprotein</keyword>
<keyword id="KW-0472">Membrane</keyword>
<keyword id="KW-0547">Nucleotide-binding</keyword>
<keyword id="KW-0560">Oxidoreductase</keyword>
<keyword id="KW-0874">Quinone</keyword>
<keyword id="KW-1185">Reference proteome</keyword>
<dbReference type="EC" id="1.8.5.4" evidence="4 5"/>
<dbReference type="EMBL" id="AE000657">
    <property type="protein sequence ID" value="AAC07903.1"/>
    <property type="molecule type" value="Genomic_DNA"/>
</dbReference>
<dbReference type="PIR" id="G70487">
    <property type="entry name" value="G70487"/>
</dbReference>
<dbReference type="RefSeq" id="NP_214500.1">
    <property type="nucleotide sequence ID" value="NC_000918.1"/>
</dbReference>
<dbReference type="RefSeq" id="WP_010881436.1">
    <property type="nucleotide sequence ID" value="NC_000918.1"/>
</dbReference>
<dbReference type="PDB" id="3HYV">
    <property type="method" value="X-ray"/>
    <property type="resolution" value="2.30 A"/>
    <property type="chains" value="A/B/C/D/E/F=1-430"/>
</dbReference>
<dbReference type="PDB" id="3HYW">
    <property type="method" value="X-ray"/>
    <property type="resolution" value="2.00 A"/>
    <property type="chains" value="A/B/C/D/E/F=1-430"/>
</dbReference>
<dbReference type="PDB" id="3HYX">
    <property type="method" value="X-ray"/>
    <property type="resolution" value="2.90 A"/>
    <property type="chains" value="A/B/C/D/E/F=1-430"/>
</dbReference>
<dbReference type="PDBsum" id="3HYV"/>
<dbReference type="PDBsum" id="3HYW"/>
<dbReference type="PDBsum" id="3HYX"/>
<dbReference type="SMR" id="O67931"/>
<dbReference type="DIP" id="DIP-48896N"/>
<dbReference type="FunCoup" id="O67931">
    <property type="interactions" value="269"/>
</dbReference>
<dbReference type="STRING" id="224324.aq_2186"/>
<dbReference type="DrugBank" id="DB07640">
    <property type="generic name" value="2-decyl-5,6-dimethoxy-3-methylcyclohexa-2,5-diene-1,4-dione"/>
</dbReference>
<dbReference type="EnsemblBacteria" id="AAC07903">
    <property type="protein sequence ID" value="AAC07903"/>
    <property type="gene ID" value="aq_2186"/>
</dbReference>
<dbReference type="KEGG" id="aae:aq_2186"/>
<dbReference type="eggNOG" id="COG0446">
    <property type="taxonomic scope" value="Bacteria"/>
</dbReference>
<dbReference type="HOGENOM" id="CLU_030742_5_2_0"/>
<dbReference type="InParanoid" id="O67931"/>
<dbReference type="OrthoDB" id="9805710at2"/>
<dbReference type="BRENDA" id="1.8.5.4">
    <property type="organism ID" value="396"/>
</dbReference>
<dbReference type="EvolutionaryTrace" id="O67931"/>
<dbReference type="Proteomes" id="UP000000798">
    <property type="component" value="Chromosome"/>
</dbReference>
<dbReference type="GO" id="GO:0016020">
    <property type="term" value="C:membrane"/>
    <property type="evidence" value="ECO:0007669"/>
    <property type="project" value="UniProtKB-SubCell"/>
</dbReference>
<dbReference type="GO" id="GO:0042802">
    <property type="term" value="F:identical protein binding"/>
    <property type="evidence" value="ECO:0000353"/>
    <property type="project" value="IntAct"/>
</dbReference>
<dbReference type="GO" id="GO:0003955">
    <property type="term" value="F:NAD(P)H dehydrogenase (quinone) activity"/>
    <property type="evidence" value="ECO:0000318"/>
    <property type="project" value="GO_Central"/>
</dbReference>
<dbReference type="GO" id="GO:0000166">
    <property type="term" value="F:nucleotide binding"/>
    <property type="evidence" value="ECO:0007669"/>
    <property type="project" value="UniProtKB-KW"/>
</dbReference>
<dbReference type="GO" id="GO:0048038">
    <property type="term" value="F:quinone binding"/>
    <property type="evidence" value="ECO:0007669"/>
    <property type="project" value="UniProtKB-KW"/>
</dbReference>
<dbReference type="GO" id="GO:0070224">
    <property type="term" value="F:sulfide:quinone oxidoreductase activity"/>
    <property type="evidence" value="ECO:0007669"/>
    <property type="project" value="UniProtKB-EC"/>
</dbReference>
<dbReference type="GO" id="GO:0019646">
    <property type="term" value="P:aerobic electron transport chain"/>
    <property type="evidence" value="ECO:0000318"/>
    <property type="project" value="GO_Central"/>
</dbReference>
<dbReference type="FunFam" id="3.50.50.100:FF:000017">
    <property type="entry name" value="Sulfide-quinone reductase"/>
    <property type="match status" value="1"/>
</dbReference>
<dbReference type="Gene3D" id="3.50.50.100">
    <property type="match status" value="1"/>
</dbReference>
<dbReference type="InterPro" id="IPR036188">
    <property type="entry name" value="FAD/NAD-bd_sf"/>
</dbReference>
<dbReference type="InterPro" id="IPR023753">
    <property type="entry name" value="FAD/NAD-binding_dom"/>
</dbReference>
<dbReference type="InterPro" id="IPR051169">
    <property type="entry name" value="NADH-Q_oxidoreductase"/>
</dbReference>
<dbReference type="PANTHER" id="PTHR42913">
    <property type="entry name" value="APOPTOSIS-INDUCING FACTOR 1"/>
    <property type="match status" value="1"/>
</dbReference>
<dbReference type="PANTHER" id="PTHR42913:SF6">
    <property type="entry name" value="SULFIDE-QUINONE REDUCTASE"/>
    <property type="match status" value="1"/>
</dbReference>
<dbReference type="Pfam" id="PF07992">
    <property type="entry name" value="Pyr_redox_2"/>
    <property type="match status" value="1"/>
</dbReference>
<dbReference type="SUPFAM" id="SSF51905">
    <property type="entry name" value="FAD/NAD(P)-binding domain"/>
    <property type="match status" value="2"/>
</dbReference>
<proteinExistence type="evidence at protein level"/>
<sequence length="430" mass="47449">MAKHVVVIGGGVGGIATAYNLRNLMPDLKITLISDRPYFGFTPAFPHLAMGWRKFEDISVPLAPLLPKFNIEFINEKAESIDPDANTVTTQSGKKIEYDYLVIATGPKLVFGAEGQEENSTSICTAEHALETQKKLQELYANPGPVVIGAIPGVSCFGPAYEFALMLHYELKKRGIRYKVPMTFITSEPYLGHFGVGGIGASKRLVEDLFAERNIDWIANVAVKAIEPDKVIYEDLNGNTHEVPAKFTMFMPSFQGPEVVASAGDKVANPANKMVIVNRCFQNPTYKNIFGVGVVTAIPPIEKTPIPTGVPKTGMMIEQMAMAVAHNIVNDIRNNPDKYAPRLSAICIADFGEDAGFFFADPVIPPRERVITKMGKWAHYFKTAFEKYFLWKVRNGNIAPSFEEKVLEIFLKVHPIELCKDCEGAPGSRC</sequence>
<feature type="chain" id="PRO_0000430824" description="Sulfide-quinone reductase">
    <location>
        <begin position="1"/>
        <end position="430"/>
    </location>
</feature>
<feature type="active site" description="Cysteine persulfide intermediate" evidence="1 5">
    <location>
        <position position="156"/>
    </location>
</feature>
<feature type="active site" description="Cysteine persulfide intermediate" evidence="1 5">
    <location>
        <position position="347"/>
    </location>
</feature>
<feature type="binding site" evidence="3">
    <location>
        <begin position="9"/>
        <end position="13"/>
    </location>
    <ligand>
        <name>FAD</name>
        <dbReference type="ChEBI" id="CHEBI:57692"/>
    </ligand>
</feature>
<feature type="binding site" evidence="3">
    <location>
        <begin position="34"/>
        <end position="36"/>
    </location>
    <ligand>
        <name>FAD</name>
        <dbReference type="ChEBI" id="CHEBI:57692"/>
    </ligand>
</feature>
<feature type="binding site" evidence="3">
    <location>
        <begin position="42"/>
        <end position="43"/>
    </location>
    <ligand>
        <name>FAD</name>
        <dbReference type="ChEBI" id="CHEBI:57692"/>
    </ligand>
</feature>
<feature type="binding site" evidence="3">
    <location>
        <position position="105"/>
    </location>
    <ligand>
        <name>FAD</name>
        <dbReference type="ChEBI" id="CHEBI:57692"/>
    </ligand>
</feature>
<feature type="binding site" evidence="3">
    <location>
        <position position="294"/>
    </location>
    <ligand>
        <name>FAD</name>
        <dbReference type="ChEBI" id="CHEBI:57692"/>
    </ligand>
</feature>
<feature type="binding site" evidence="3">
    <location>
        <position position="314"/>
    </location>
    <ligand>
        <name>FAD</name>
        <dbReference type="ChEBI" id="CHEBI:57692"/>
    </ligand>
</feature>
<feature type="binding site" evidence="3">
    <location>
        <position position="346"/>
    </location>
    <ligand>
        <name>a quinone</name>
        <dbReference type="ChEBI" id="CHEBI:132124"/>
    </ligand>
</feature>
<feature type="binding site" evidence="3">
    <location>
        <position position="382"/>
    </location>
    <ligand>
        <name>FAD</name>
        <dbReference type="ChEBI" id="CHEBI:57692"/>
    </ligand>
</feature>
<feature type="disulfide bond" evidence="3">
    <location>
        <begin position="280"/>
        <end position="422"/>
    </location>
</feature>
<feature type="disulfide bond" evidence="3">
    <location>
        <begin position="419"/>
        <end position="430"/>
    </location>
</feature>
<feature type="strand" evidence="8">
    <location>
        <begin position="4"/>
        <end position="8"/>
    </location>
</feature>
<feature type="helix" evidence="8">
    <location>
        <begin position="12"/>
        <end position="24"/>
    </location>
</feature>
<feature type="strand" evidence="8">
    <location>
        <begin position="29"/>
        <end position="33"/>
    </location>
</feature>
<feature type="strand" evidence="8">
    <location>
        <begin position="35"/>
        <end position="40"/>
    </location>
</feature>
<feature type="helix" evidence="8">
    <location>
        <begin position="42"/>
        <end position="44"/>
    </location>
</feature>
<feature type="helix" evidence="8">
    <location>
        <begin position="45"/>
        <end position="49"/>
    </location>
</feature>
<feature type="helix" evidence="8">
    <location>
        <begin position="55"/>
        <end position="57"/>
    </location>
</feature>
<feature type="strand" evidence="8">
    <location>
        <begin position="58"/>
        <end position="62"/>
    </location>
</feature>
<feature type="turn" evidence="8">
    <location>
        <begin position="63"/>
        <end position="65"/>
    </location>
</feature>
<feature type="helix" evidence="8">
    <location>
        <begin position="66"/>
        <end position="69"/>
    </location>
</feature>
<feature type="strand" evidence="8">
    <location>
        <begin position="71"/>
        <end position="74"/>
    </location>
</feature>
<feature type="strand" evidence="8">
    <location>
        <begin position="78"/>
        <end position="82"/>
    </location>
</feature>
<feature type="turn" evidence="8">
    <location>
        <begin position="83"/>
        <end position="86"/>
    </location>
</feature>
<feature type="strand" evidence="8">
    <location>
        <begin position="87"/>
        <end position="90"/>
    </location>
</feature>
<feature type="strand" evidence="8">
    <location>
        <begin position="95"/>
        <end position="97"/>
    </location>
</feature>
<feature type="strand" evidence="8">
    <location>
        <begin position="99"/>
        <end position="103"/>
    </location>
</feature>
<feature type="strand" evidence="8">
    <location>
        <begin position="108"/>
        <end position="110"/>
    </location>
</feature>
<feature type="helix" evidence="8">
    <location>
        <begin position="116"/>
        <end position="119"/>
    </location>
</feature>
<feature type="helix" evidence="8">
    <location>
        <begin position="126"/>
        <end position="141"/>
    </location>
</feature>
<feature type="strand" evidence="8">
    <location>
        <begin position="146"/>
        <end position="150"/>
    </location>
</feature>
<feature type="helix" evidence="8">
    <location>
        <begin position="158"/>
        <end position="173"/>
    </location>
</feature>
<feature type="helix" evidence="8">
    <location>
        <begin position="177"/>
        <end position="179"/>
    </location>
</feature>
<feature type="strand" evidence="8">
    <location>
        <begin position="182"/>
        <end position="185"/>
    </location>
</feature>
<feature type="strand" evidence="8">
    <location>
        <begin position="187"/>
        <end position="190"/>
    </location>
</feature>
<feature type="turn" evidence="8">
    <location>
        <begin position="194"/>
        <end position="197"/>
    </location>
</feature>
<feature type="helix" evidence="8">
    <location>
        <begin position="202"/>
        <end position="212"/>
    </location>
</feature>
<feature type="strand" evidence="8">
    <location>
        <begin position="216"/>
        <end position="218"/>
    </location>
</feature>
<feature type="strand" evidence="8">
    <location>
        <begin position="222"/>
        <end position="226"/>
    </location>
</feature>
<feature type="strand" evidence="8">
    <location>
        <begin position="228"/>
        <end position="234"/>
    </location>
</feature>
<feature type="strand" evidence="8">
    <location>
        <begin position="240"/>
        <end position="244"/>
    </location>
</feature>
<feature type="strand" evidence="8">
    <location>
        <begin position="246"/>
        <end position="251"/>
    </location>
</feature>
<feature type="strand" evidence="8">
    <location>
        <begin position="253"/>
        <end position="255"/>
    </location>
</feature>
<feature type="helix" evidence="8">
    <location>
        <begin position="258"/>
        <end position="261"/>
    </location>
</feature>
<feature type="turn" evidence="8">
    <location>
        <begin position="265"/>
        <end position="267"/>
    </location>
</feature>
<feature type="turn" evidence="8">
    <location>
        <begin position="270"/>
        <end position="272"/>
    </location>
</feature>
<feature type="strand" evidence="8">
    <location>
        <begin position="284"/>
        <end position="286"/>
    </location>
</feature>
<feature type="strand" evidence="8">
    <location>
        <begin position="289"/>
        <end position="291"/>
    </location>
</feature>
<feature type="helix" evidence="8">
    <location>
        <begin position="314"/>
        <end position="332"/>
    </location>
</feature>
<feature type="strand" evidence="8">
    <location>
        <begin position="339"/>
        <end position="341"/>
    </location>
</feature>
<feature type="strand" evidence="8">
    <location>
        <begin position="345"/>
        <end position="350"/>
    </location>
</feature>
<feature type="strand" evidence="8">
    <location>
        <begin position="352"/>
        <end position="366"/>
    </location>
</feature>
<feature type="strand" evidence="8">
    <location>
        <begin position="368"/>
        <end position="375"/>
    </location>
</feature>
<feature type="helix" evidence="8">
    <location>
        <begin position="377"/>
        <end position="395"/>
    </location>
</feature>
<feature type="helix" evidence="8">
    <location>
        <begin position="401"/>
        <end position="411"/>
    </location>
</feature>
<feature type="strand" evidence="8">
    <location>
        <begin position="415"/>
        <end position="418"/>
    </location>
</feature>
<accession>O67931</accession>